<comment type="function">
    <text evidence="1">Involved in the biogenesis of the 60S ribosomal subunit. Ensures the docking of GTPBP4/NOG1 to pre-60S particles (By similarity).</text>
</comment>
<comment type="subunit">
    <text evidence="1 2">Associated with nucleolar and cytoplasmic pre-60S particles (By similarity). At the end of biogenesis it dissociates from cytoplasmic pre-60S particles and is likely to be exchanged for its ribosomal homolog, RPL24 (By similarity).</text>
</comment>
<comment type="subcellular location">
    <subcellularLocation>
        <location evidence="2">Nucleus</location>
        <location evidence="2">Nucleolus</location>
    </subcellularLocation>
</comment>
<comment type="similarity">
    <text evidence="3">Belongs to the eukaryotic ribosomal protein eL24 family.</text>
</comment>
<dbReference type="EMBL" id="BC051780">
    <property type="protein sequence ID" value="AAH51780.1"/>
    <property type="molecule type" value="mRNA"/>
</dbReference>
<dbReference type="RefSeq" id="NP_998158.1">
    <property type="nucleotide sequence ID" value="NM_212993.1"/>
</dbReference>
<dbReference type="SMR" id="Q7ZTZ2"/>
<dbReference type="FunCoup" id="Q7ZTZ2">
    <property type="interactions" value="2363"/>
</dbReference>
<dbReference type="STRING" id="7955.ENSDARP00000095488"/>
<dbReference type="PaxDb" id="7955-ENSDARP00000095488"/>
<dbReference type="Ensembl" id="ENSDART00000104717">
    <property type="protein sequence ID" value="ENSDARP00000095488"/>
    <property type="gene ID" value="ENSDARG00000040439"/>
</dbReference>
<dbReference type="GeneID" id="406266"/>
<dbReference type="KEGG" id="dre:406266"/>
<dbReference type="AGR" id="ZFIN:ZDB-GENE-040426-1925"/>
<dbReference type="CTD" id="51187"/>
<dbReference type="ZFIN" id="ZDB-GENE-040426-1925">
    <property type="gene designation" value="rsl24d1"/>
</dbReference>
<dbReference type="eggNOG" id="KOG1723">
    <property type="taxonomic scope" value="Eukaryota"/>
</dbReference>
<dbReference type="HOGENOM" id="CLU_089419_2_2_1"/>
<dbReference type="InParanoid" id="Q7ZTZ2"/>
<dbReference type="OMA" id="TCYFCSG"/>
<dbReference type="OrthoDB" id="10262490at2759"/>
<dbReference type="PhylomeDB" id="Q7ZTZ2"/>
<dbReference type="TreeFam" id="TF314926"/>
<dbReference type="PRO" id="PR:Q7ZTZ2"/>
<dbReference type="Proteomes" id="UP000000437">
    <property type="component" value="Chromosome 25"/>
</dbReference>
<dbReference type="Bgee" id="ENSDARG00000040439">
    <property type="expression patterns" value="Expressed in granulocyte and 36 other cell types or tissues"/>
</dbReference>
<dbReference type="GO" id="GO:0005730">
    <property type="term" value="C:nucleolus"/>
    <property type="evidence" value="ECO:0000318"/>
    <property type="project" value="GO_Central"/>
</dbReference>
<dbReference type="GO" id="GO:0003735">
    <property type="term" value="F:structural constituent of ribosome"/>
    <property type="evidence" value="ECO:0007669"/>
    <property type="project" value="InterPro"/>
</dbReference>
<dbReference type="GO" id="GO:0042273">
    <property type="term" value="P:ribosomal large subunit biogenesis"/>
    <property type="evidence" value="ECO:0000318"/>
    <property type="project" value="GO_Central"/>
</dbReference>
<dbReference type="CDD" id="cd00472">
    <property type="entry name" value="Ribosomal_L24e_L24"/>
    <property type="match status" value="1"/>
</dbReference>
<dbReference type="FunFam" id="2.30.170.20:FF:000001">
    <property type="entry name" value="probable ribosome biogenesis protein RLP24"/>
    <property type="match status" value="1"/>
</dbReference>
<dbReference type="Gene3D" id="2.30.170.20">
    <property type="entry name" value="Ribosomal protein L24e"/>
    <property type="match status" value="1"/>
</dbReference>
<dbReference type="InterPro" id="IPR038630">
    <property type="entry name" value="L24e/L24_sf"/>
</dbReference>
<dbReference type="InterPro" id="IPR056366">
    <property type="entry name" value="Ribosomal_eL24"/>
</dbReference>
<dbReference type="InterPro" id="IPR000988">
    <property type="entry name" value="Ribosomal_eL24-rel_N"/>
</dbReference>
<dbReference type="InterPro" id="IPR023442">
    <property type="entry name" value="Ribosomal_eL24_CS"/>
</dbReference>
<dbReference type="InterPro" id="IPR011017">
    <property type="entry name" value="TRASH_dom"/>
</dbReference>
<dbReference type="PANTHER" id="PTHR10792">
    <property type="entry name" value="60S RIBOSOMAL PROTEIN L24"/>
    <property type="match status" value="1"/>
</dbReference>
<dbReference type="PANTHER" id="PTHR10792:SF8">
    <property type="entry name" value="RIBOSOME BIOGENESIS PROTEIN RLP24-RELATED"/>
    <property type="match status" value="1"/>
</dbReference>
<dbReference type="Pfam" id="PF01246">
    <property type="entry name" value="Ribosomal_L24e"/>
    <property type="match status" value="1"/>
</dbReference>
<dbReference type="SMART" id="SM00746">
    <property type="entry name" value="TRASH"/>
    <property type="match status" value="1"/>
</dbReference>
<dbReference type="SUPFAM" id="SSF57716">
    <property type="entry name" value="Glucocorticoid receptor-like (DNA-binding domain)"/>
    <property type="match status" value="1"/>
</dbReference>
<dbReference type="PROSITE" id="PS01073">
    <property type="entry name" value="RIBOSOMAL_L24E"/>
    <property type="match status" value="1"/>
</dbReference>
<accession>Q7ZTZ2</accession>
<proteinExistence type="evidence at transcript level"/>
<organism>
    <name type="scientific">Danio rerio</name>
    <name type="common">Zebrafish</name>
    <name type="synonym">Brachydanio rerio</name>
    <dbReference type="NCBI Taxonomy" id="7955"/>
    <lineage>
        <taxon>Eukaryota</taxon>
        <taxon>Metazoa</taxon>
        <taxon>Chordata</taxon>
        <taxon>Craniata</taxon>
        <taxon>Vertebrata</taxon>
        <taxon>Euteleostomi</taxon>
        <taxon>Actinopterygii</taxon>
        <taxon>Neopterygii</taxon>
        <taxon>Teleostei</taxon>
        <taxon>Ostariophysi</taxon>
        <taxon>Cypriniformes</taxon>
        <taxon>Danionidae</taxon>
        <taxon>Danioninae</taxon>
        <taxon>Danio</taxon>
    </lineage>
</organism>
<keyword id="KW-0539">Nucleus</keyword>
<keyword id="KW-1185">Reference proteome</keyword>
<keyword id="KW-0690">Ribosome biogenesis</keyword>
<gene>
    <name type="primary">rsl24d1</name>
    <name type="ORF">zgc:56202</name>
</gene>
<sequence length="161" mass="19147">MRIEKCYFCSAPVYPGHGMMFVRNDCKVFRFCRSKCHKNFKKKRNPRKTRWTKAFRKSAGKELTVDNSLEFEKRRNTPVKYNRELWSKTVEAMRKVESIKHKRQARFIMNRLKKGKELEKAADISEVKKNIHLIKAPHAGQAKQLEDKMVQKLAEDVEMDE</sequence>
<reference key="1">
    <citation type="submission" date="2003-05" db="EMBL/GenBank/DDBJ databases">
        <authorList>
            <consortium name="NIH - Zebrafish Gene Collection (ZGC) project"/>
        </authorList>
    </citation>
    <scope>NUCLEOTIDE SEQUENCE [LARGE SCALE MRNA]</scope>
</reference>
<protein>
    <recommendedName>
        <fullName>Probable ribosome biogenesis protein RLP24</fullName>
    </recommendedName>
    <alternativeName>
        <fullName>Ribosomal L24 domain-containing protein 1</fullName>
    </alternativeName>
</protein>
<name>RLP24_DANRE</name>
<evidence type="ECO:0000250" key="1">
    <source>
        <dbReference type="UniProtKB" id="Q07915"/>
    </source>
</evidence>
<evidence type="ECO:0000250" key="2">
    <source>
        <dbReference type="UniProtKB" id="Q9UHA3"/>
    </source>
</evidence>
<evidence type="ECO:0000305" key="3"/>
<feature type="chain" id="PRO_0000136899" description="Probable ribosome biogenesis protein RLP24">
    <location>
        <begin position="1"/>
        <end position="161"/>
    </location>
</feature>